<evidence type="ECO:0000255" key="1">
    <source>
        <dbReference type="HAMAP-Rule" id="MF_02113"/>
    </source>
</evidence>
<comment type="function">
    <text evidence="1">Component of the proteasome core, a large protease complex with broad specificity involved in protein degradation.</text>
</comment>
<comment type="catalytic activity">
    <reaction evidence="1">
        <text>Cleavage of peptide bonds with very broad specificity.</text>
        <dbReference type="EC" id="3.4.25.1"/>
    </reaction>
</comment>
<comment type="activity regulation">
    <text evidence="1">The formation of the proteasomal ATPase ARC-20S proteasome complex, likely via the docking of the C-termini of ARC into the intersubunit pockets in the alpha-rings, may trigger opening of the gate for substrate entry. Interconversion between the open-gate and close-gate conformations leads to a dynamic regulation of the 20S proteasome proteolysis activity.</text>
</comment>
<comment type="pathway">
    <text evidence="1">Protein degradation; proteasomal Pup-dependent pathway.</text>
</comment>
<comment type="subunit">
    <text evidence="1">The 20S proteasome core is composed of 14 alpha and 14 beta subunits that assemble into four stacked heptameric rings, resulting in a barrel-shaped structure. The two inner rings, each composed of seven catalytic beta subunits, are sandwiched by two outer rings, each composed of seven alpha subunits. The catalytic chamber with the active sites is on the inside of the barrel. Has a gated structure, the ends of the cylinder being occluded by the N-termini of the alpha-subunits. Is capped by the proteasome-associated ATPase, ARC.</text>
</comment>
<comment type="subcellular location">
    <subcellularLocation>
        <location evidence="1">Cytoplasm</location>
    </subcellularLocation>
</comment>
<comment type="similarity">
    <text evidence="1">Belongs to the peptidase T1B family.</text>
</comment>
<feature type="propeptide" id="PRO_0000397528" description="Removed in mature form; by autocatalysis" evidence="1">
    <location>
        <begin position="1"/>
        <end position="57"/>
    </location>
</feature>
<feature type="chain" id="PRO_0000397529" description="Proteasome subunit beta">
    <location>
        <begin position="58"/>
        <end position="291"/>
    </location>
</feature>
<feature type="active site" description="Nucleophile" evidence="1">
    <location>
        <position position="58"/>
    </location>
</feature>
<proteinExistence type="inferred from homology"/>
<reference key="1">
    <citation type="journal article" date="2009" name="Vaccine">
        <title>Whole genome sequence analysis of Mycobacterium bovis bacillus Calmette-Guerin (BCG) Tokyo 172: a comparative study of BCG vaccine substrains.</title>
        <authorList>
            <person name="Seki M."/>
            <person name="Honda I."/>
            <person name="Fujita I."/>
            <person name="Yano I."/>
            <person name="Yamamoto S."/>
            <person name="Koyama A."/>
        </authorList>
    </citation>
    <scope>NUCLEOTIDE SEQUENCE [LARGE SCALE GENOMIC DNA]</scope>
    <source>
        <strain>BCG / Tokyo 172 / ATCC 35737 / TMC 1019</strain>
    </source>
</reference>
<name>PSB_MYCBT</name>
<organism>
    <name type="scientific">Mycobacterium bovis (strain BCG / Tokyo 172 / ATCC 35737 / TMC 1019)</name>
    <dbReference type="NCBI Taxonomy" id="561275"/>
    <lineage>
        <taxon>Bacteria</taxon>
        <taxon>Bacillati</taxon>
        <taxon>Actinomycetota</taxon>
        <taxon>Actinomycetes</taxon>
        <taxon>Mycobacteriales</taxon>
        <taxon>Mycobacteriaceae</taxon>
        <taxon>Mycobacterium</taxon>
        <taxon>Mycobacterium tuberculosis complex</taxon>
    </lineage>
</organism>
<protein>
    <recommendedName>
        <fullName evidence="1">Proteasome subunit beta</fullName>
        <ecNumber evidence="1">3.4.25.1</ecNumber>
    </recommendedName>
    <alternativeName>
        <fullName evidence="1">20S proteasome beta subunit</fullName>
    </alternativeName>
    <alternativeName>
        <fullName evidence="1">Proteasome core protein PrcB</fullName>
    </alternativeName>
</protein>
<sequence>MTWPLPDRLSINSLSGTPAVDLSSFTDFLRRQAPELLPASISGGAPLAGGDAQLPHGTTIVALKYPGGVVMAGDRRSTQGNMISGRDVRKVYITDDYTATGIAGTAAVAVEFARLYAVELEHYEKLEGVPLTFAGKINRLAIMVRGNLAAAMQGLLALPLLAGYDIHASDPQSAGRIVSFDAAGGWNIEEEGYQAVGSGSLFAKSSMKKLYSQVTDGDSGLRVAVEALYDAADDDSATGGPDLVRGIFPTAVIIDADGAVDVPESRIAELARAIIESRSGADTFGSDGGEK</sequence>
<accession>C1AQ26</accession>
<gene>
    <name evidence="1" type="primary">prcB</name>
    <name type="ordered locus">JTY_2121</name>
</gene>
<keyword id="KW-0068">Autocatalytic cleavage</keyword>
<keyword id="KW-0963">Cytoplasm</keyword>
<keyword id="KW-0378">Hydrolase</keyword>
<keyword id="KW-0645">Protease</keyword>
<keyword id="KW-0647">Proteasome</keyword>
<keyword id="KW-0888">Threonine protease</keyword>
<keyword id="KW-0865">Zymogen</keyword>
<dbReference type="EC" id="3.4.25.1" evidence="1"/>
<dbReference type="EMBL" id="AP010918">
    <property type="protein sequence ID" value="BAH26405.1"/>
    <property type="molecule type" value="Genomic_DNA"/>
</dbReference>
<dbReference type="RefSeq" id="WP_003411023.1">
    <property type="nucleotide sequence ID" value="NZ_CP014566.1"/>
</dbReference>
<dbReference type="SMR" id="C1AQ26"/>
<dbReference type="MEROPS" id="T01.005"/>
<dbReference type="KEGG" id="mbt:JTY_2121"/>
<dbReference type="HOGENOM" id="CLU_035750_2_0_11"/>
<dbReference type="UniPathway" id="UPA00997"/>
<dbReference type="GO" id="GO:0005737">
    <property type="term" value="C:cytoplasm"/>
    <property type="evidence" value="ECO:0007669"/>
    <property type="project" value="UniProtKB-SubCell"/>
</dbReference>
<dbReference type="GO" id="GO:0019774">
    <property type="term" value="C:proteasome core complex, beta-subunit complex"/>
    <property type="evidence" value="ECO:0007669"/>
    <property type="project" value="UniProtKB-UniRule"/>
</dbReference>
<dbReference type="GO" id="GO:0004298">
    <property type="term" value="F:threonine-type endopeptidase activity"/>
    <property type="evidence" value="ECO:0007669"/>
    <property type="project" value="UniProtKB-UniRule"/>
</dbReference>
<dbReference type="GO" id="GO:0019941">
    <property type="term" value="P:modification-dependent protein catabolic process"/>
    <property type="evidence" value="ECO:0007669"/>
    <property type="project" value="UniProtKB-UniRule"/>
</dbReference>
<dbReference type="GO" id="GO:0010498">
    <property type="term" value="P:proteasomal protein catabolic process"/>
    <property type="evidence" value="ECO:0007669"/>
    <property type="project" value="UniProtKB-UniRule"/>
</dbReference>
<dbReference type="CDD" id="cd01906">
    <property type="entry name" value="proteasome_protease_HslV"/>
    <property type="match status" value="1"/>
</dbReference>
<dbReference type="FunFam" id="3.60.20.10:FF:000046">
    <property type="entry name" value="Proteasome subunit beta"/>
    <property type="match status" value="1"/>
</dbReference>
<dbReference type="Gene3D" id="3.60.20.10">
    <property type="entry name" value="Glutamine Phosphoribosylpyrophosphate, subunit 1, domain 1"/>
    <property type="match status" value="1"/>
</dbReference>
<dbReference type="HAMAP" id="MF_02113_B">
    <property type="entry name" value="Proteasome_B_B"/>
    <property type="match status" value="1"/>
</dbReference>
<dbReference type="InterPro" id="IPR029055">
    <property type="entry name" value="Ntn_hydrolases_N"/>
</dbReference>
<dbReference type="InterPro" id="IPR001353">
    <property type="entry name" value="Proteasome_sua/b"/>
</dbReference>
<dbReference type="InterPro" id="IPR023333">
    <property type="entry name" value="Proteasome_suB-type"/>
</dbReference>
<dbReference type="InterPro" id="IPR022483">
    <property type="entry name" value="PSB_actinobac"/>
</dbReference>
<dbReference type="NCBIfam" id="TIGR03690">
    <property type="entry name" value="20S_bact_beta"/>
    <property type="match status" value="1"/>
</dbReference>
<dbReference type="PANTHER" id="PTHR32194:SF0">
    <property type="entry name" value="ATP-DEPENDENT PROTEASE SUBUNIT HSLV"/>
    <property type="match status" value="1"/>
</dbReference>
<dbReference type="PANTHER" id="PTHR32194">
    <property type="entry name" value="METALLOPROTEASE TLDD"/>
    <property type="match status" value="1"/>
</dbReference>
<dbReference type="Pfam" id="PF00227">
    <property type="entry name" value="Proteasome"/>
    <property type="match status" value="1"/>
</dbReference>
<dbReference type="SUPFAM" id="SSF56235">
    <property type="entry name" value="N-terminal nucleophile aminohydrolases (Ntn hydrolases)"/>
    <property type="match status" value="1"/>
</dbReference>
<dbReference type="PROSITE" id="PS51476">
    <property type="entry name" value="PROTEASOME_BETA_2"/>
    <property type="match status" value="1"/>
</dbReference>